<keyword id="KW-0963">Cytoplasm</keyword>
<keyword id="KW-0489">Methyltransferase</keyword>
<keyword id="KW-0698">rRNA processing</keyword>
<keyword id="KW-0949">S-adenosyl-L-methionine</keyword>
<keyword id="KW-0808">Transferase</keyword>
<sequence length="311" mass="35709">MFHHISVMLNETIDYLNVKENGVYIDCTLGGAGHALYLLNQLNDDGRLIAIDQDQTAIDNAKKVLKEHLHKVTFVHSNFRELTQILKDLNIEKVDGIYYDLGVSSPQLDIPERGFSYHHDATLDMRMDQTQELTAYEIVNNWSYEALVKIFYRYGEEKFSKQIARRIEAHREQQPITTTLELVDIIKEGIPAKARRKGGHPAKRVFQALRIAVNDELSAFEDSIEQAIELVKVDGRISVITFHSLEDRLCKQVFQEYEKGPEVPRGLPVIPEAYTPKLKRINRKPITATEEDLDDNNRARSAKLRVAEILK</sequence>
<name>RSMH_STAAB</name>
<feature type="chain" id="PRO_0000387134" description="Ribosomal RNA small subunit methyltransferase H">
    <location>
        <begin position="1"/>
        <end position="311"/>
    </location>
</feature>
<feature type="binding site" evidence="1">
    <location>
        <begin position="32"/>
        <end position="34"/>
    </location>
    <ligand>
        <name>S-adenosyl-L-methionine</name>
        <dbReference type="ChEBI" id="CHEBI:59789"/>
    </ligand>
</feature>
<feature type="binding site" evidence="1">
    <location>
        <position position="52"/>
    </location>
    <ligand>
        <name>S-adenosyl-L-methionine</name>
        <dbReference type="ChEBI" id="CHEBI:59789"/>
    </ligand>
</feature>
<feature type="binding site" evidence="1">
    <location>
        <position position="79"/>
    </location>
    <ligand>
        <name>S-adenosyl-L-methionine</name>
        <dbReference type="ChEBI" id="CHEBI:59789"/>
    </ligand>
</feature>
<feature type="binding site" evidence="1">
    <location>
        <position position="100"/>
    </location>
    <ligand>
        <name>S-adenosyl-L-methionine</name>
        <dbReference type="ChEBI" id="CHEBI:59789"/>
    </ligand>
</feature>
<feature type="binding site" evidence="1">
    <location>
        <position position="107"/>
    </location>
    <ligand>
        <name>S-adenosyl-L-methionine</name>
        <dbReference type="ChEBI" id="CHEBI:59789"/>
    </ligand>
</feature>
<reference key="1">
    <citation type="journal article" date="2007" name="PLoS ONE">
        <title>Molecular correlates of host specialization in Staphylococcus aureus.</title>
        <authorList>
            <person name="Herron-Olson L."/>
            <person name="Fitzgerald J.R."/>
            <person name="Musser J.M."/>
            <person name="Kapur V."/>
        </authorList>
    </citation>
    <scope>NUCLEOTIDE SEQUENCE [LARGE SCALE GENOMIC DNA]</scope>
    <source>
        <strain>bovine RF122 / ET3-1</strain>
    </source>
</reference>
<dbReference type="EC" id="2.1.1.199" evidence="1"/>
<dbReference type="EMBL" id="AJ938182">
    <property type="protein sequence ID" value="CAI80731.1"/>
    <property type="molecule type" value="Genomic_DNA"/>
</dbReference>
<dbReference type="RefSeq" id="WP_000468390.1">
    <property type="nucleotide sequence ID" value="NC_007622.1"/>
</dbReference>
<dbReference type="SMR" id="Q2YXE3"/>
<dbReference type="KEGG" id="sab:SAB1043"/>
<dbReference type="HOGENOM" id="CLU_038422_2_0_9"/>
<dbReference type="GO" id="GO:0005737">
    <property type="term" value="C:cytoplasm"/>
    <property type="evidence" value="ECO:0007669"/>
    <property type="project" value="UniProtKB-SubCell"/>
</dbReference>
<dbReference type="GO" id="GO:0071424">
    <property type="term" value="F:rRNA (cytosine-N4-)-methyltransferase activity"/>
    <property type="evidence" value="ECO:0007669"/>
    <property type="project" value="UniProtKB-UniRule"/>
</dbReference>
<dbReference type="GO" id="GO:0070475">
    <property type="term" value="P:rRNA base methylation"/>
    <property type="evidence" value="ECO:0007669"/>
    <property type="project" value="UniProtKB-UniRule"/>
</dbReference>
<dbReference type="FunFam" id="1.10.150.170:FF:000001">
    <property type="entry name" value="Ribosomal RNA small subunit methyltransferase H"/>
    <property type="match status" value="1"/>
</dbReference>
<dbReference type="Gene3D" id="1.10.150.170">
    <property type="entry name" value="Putative methyltransferase TM0872, insert domain"/>
    <property type="match status" value="1"/>
</dbReference>
<dbReference type="Gene3D" id="3.40.50.150">
    <property type="entry name" value="Vaccinia Virus protein VP39"/>
    <property type="match status" value="1"/>
</dbReference>
<dbReference type="HAMAP" id="MF_01007">
    <property type="entry name" value="16SrRNA_methyltr_H"/>
    <property type="match status" value="1"/>
</dbReference>
<dbReference type="InterPro" id="IPR002903">
    <property type="entry name" value="RsmH"/>
</dbReference>
<dbReference type="InterPro" id="IPR023397">
    <property type="entry name" value="SAM-dep_MeTrfase_MraW_recog"/>
</dbReference>
<dbReference type="InterPro" id="IPR029063">
    <property type="entry name" value="SAM-dependent_MTases_sf"/>
</dbReference>
<dbReference type="NCBIfam" id="TIGR00006">
    <property type="entry name" value="16S rRNA (cytosine(1402)-N(4))-methyltransferase RsmH"/>
    <property type="match status" value="1"/>
</dbReference>
<dbReference type="PANTHER" id="PTHR11265:SF0">
    <property type="entry name" value="12S RRNA N4-METHYLCYTIDINE METHYLTRANSFERASE"/>
    <property type="match status" value="1"/>
</dbReference>
<dbReference type="PANTHER" id="PTHR11265">
    <property type="entry name" value="S-ADENOSYL-METHYLTRANSFERASE MRAW"/>
    <property type="match status" value="1"/>
</dbReference>
<dbReference type="Pfam" id="PF01795">
    <property type="entry name" value="Methyltransf_5"/>
    <property type="match status" value="1"/>
</dbReference>
<dbReference type="PIRSF" id="PIRSF004486">
    <property type="entry name" value="MraW"/>
    <property type="match status" value="1"/>
</dbReference>
<dbReference type="SUPFAM" id="SSF81799">
    <property type="entry name" value="Putative methyltransferase TM0872, insert domain"/>
    <property type="match status" value="1"/>
</dbReference>
<dbReference type="SUPFAM" id="SSF53335">
    <property type="entry name" value="S-adenosyl-L-methionine-dependent methyltransferases"/>
    <property type="match status" value="1"/>
</dbReference>
<comment type="function">
    <text evidence="1">Specifically methylates the N4 position of cytidine in position 1402 (C1402) of 16S rRNA.</text>
</comment>
<comment type="catalytic activity">
    <reaction evidence="1">
        <text>cytidine(1402) in 16S rRNA + S-adenosyl-L-methionine = N(4)-methylcytidine(1402) in 16S rRNA + S-adenosyl-L-homocysteine + H(+)</text>
        <dbReference type="Rhea" id="RHEA:42928"/>
        <dbReference type="Rhea" id="RHEA-COMP:10286"/>
        <dbReference type="Rhea" id="RHEA-COMP:10287"/>
        <dbReference type="ChEBI" id="CHEBI:15378"/>
        <dbReference type="ChEBI" id="CHEBI:57856"/>
        <dbReference type="ChEBI" id="CHEBI:59789"/>
        <dbReference type="ChEBI" id="CHEBI:74506"/>
        <dbReference type="ChEBI" id="CHEBI:82748"/>
        <dbReference type="EC" id="2.1.1.199"/>
    </reaction>
</comment>
<comment type="subcellular location">
    <subcellularLocation>
        <location evidence="1">Cytoplasm</location>
    </subcellularLocation>
</comment>
<comment type="similarity">
    <text evidence="1">Belongs to the methyltransferase superfamily. RsmH family.</text>
</comment>
<organism>
    <name type="scientific">Staphylococcus aureus (strain bovine RF122 / ET3-1)</name>
    <dbReference type="NCBI Taxonomy" id="273036"/>
    <lineage>
        <taxon>Bacteria</taxon>
        <taxon>Bacillati</taxon>
        <taxon>Bacillota</taxon>
        <taxon>Bacilli</taxon>
        <taxon>Bacillales</taxon>
        <taxon>Staphylococcaceae</taxon>
        <taxon>Staphylococcus</taxon>
    </lineage>
</organism>
<accession>Q2YXE3</accession>
<gene>
    <name evidence="1" type="primary">rsmH</name>
    <name type="synonym">mraW</name>
    <name type="ordered locus">SAB1043</name>
</gene>
<protein>
    <recommendedName>
        <fullName evidence="1">Ribosomal RNA small subunit methyltransferase H</fullName>
        <ecNumber evidence="1">2.1.1.199</ecNumber>
    </recommendedName>
    <alternativeName>
        <fullName evidence="1">16S rRNA m(4)C1402 methyltransferase</fullName>
    </alternativeName>
    <alternativeName>
        <fullName evidence="1">rRNA (cytosine-N(4)-)-methyltransferase RsmH</fullName>
    </alternativeName>
</protein>
<evidence type="ECO:0000255" key="1">
    <source>
        <dbReference type="HAMAP-Rule" id="MF_01007"/>
    </source>
</evidence>
<proteinExistence type="inferred from homology"/>